<comment type="function">
    <text evidence="1">Acts as a guanine nucleotide exchange factor (GEF) for Rab5 GTPase. Regulates the ALS2-mediated endosome dynamics (By similarity).</text>
</comment>
<comment type="subunit">
    <text evidence="1">Homodimer. Forms a heteromeric complex with ALS2. Interacts with ALS2 and RAB5A (By similarity).</text>
</comment>
<comment type="subcellular location">
    <subcellularLocation>
        <location>Cytoplasm</location>
    </subcellularLocation>
    <text evidence="1">Distributed onto the vesicular compartments in the cytoplasm with strong punctated staining. Colocalizes with RAB5A onto the vesicular/membranous compartments in the cytoplasm, particularly to the leading edges of the cells (By similarity).</text>
</comment>
<gene>
    <name type="primary">ALS2CL</name>
</gene>
<accession>A6QP75</accession>
<organism>
    <name type="scientific">Bos taurus</name>
    <name type="common">Bovine</name>
    <dbReference type="NCBI Taxonomy" id="9913"/>
    <lineage>
        <taxon>Eukaryota</taxon>
        <taxon>Metazoa</taxon>
        <taxon>Chordata</taxon>
        <taxon>Craniata</taxon>
        <taxon>Vertebrata</taxon>
        <taxon>Euteleostomi</taxon>
        <taxon>Mammalia</taxon>
        <taxon>Eutheria</taxon>
        <taxon>Laurasiatheria</taxon>
        <taxon>Artiodactyla</taxon>
        <taxon>Ruminantia</taxon>
        <taxon>Pecora</taxon>
        <taxon>Bovidae</taxon>
        <taxon>Bovinae</taxon>
        <taxon>Bos</taxon>
    </lineage>
</organism>
<feature type="chain" id="PRO_0000313848" description="ALS2 C-terminal-like protein">
    <location>
        <begin position="1"/>
        <end position="953"/>
    </location>
</feature>
<feature type="repeat" description="MORN 1">
    <location>
        <begin position="358"/>
        <end position="380"/>
    </location>
</feature>
<feature type="repeat" description="MORN 2">
    <location>
        <begin position="381"/>
        <end position="403"/>
    </location>
</feature>
<feature type="repeat" description="MORN 3">
    <location>
        <begin position="409"/>
        <end position="431"/>
    </location>
</feature>
<feature type="repeat" description="MORN 4">
    <location>
        <begin position="432"/>
        <end position="454"/>
    </location>
</feature>
<feature type="repeat" description="MORN 5">
    <location>
        <begin position="459"/>
        <end position="481"/>
    </location>
</feature>
<feature type="repeat" description="MORN 6">
    <location>
        <begin position="483"/>
        <end position="505"/>
    </location>
</feature>
<feature type="repeat" description="MORN 7">
    <location>
        <begin position="506"/>
        <end position="528"/>
    </location>
</feature>
<feature type="repeat" description="MORN 8">
    <location>
        <begin position="529"/>
        <end position="552"/>
    </location>
</feature>
<feature type="domain" description="VPS9" evidence="2">
    <location>
        <begin position="796"/>
        <end position="942"/>
    </location>
</feature>
<name>AL2CL_BOVIN</name>
<proteinExistence type="evidence at transcript level"/>
<reference key="1">
    <citation type="submission" date="2007-07" db="EMBL/GenBank/DDBJ databases">
        <authorList>
            <consortium name="NIH - Mammalian Gene Collection (MGC) project"/>
        </authorList>
    </citation>
    <scope>NUCLEOTIDE SEQUENCE [LARGE SCALE MRNA]</scope>
    <source>
        <strain>Hereford</strain>
        <tissue>Fetal skin</tissue>
    </source>
</reference>
<keyword id="KW-0963">Cytoplasm</keyword>
<keyword id="KW-0343">GTPase activation</keyword>
<keyword id="KW-1185">Reference proteome</keyword>
<keyword id="KW-0677">Repeat</keyword>
<protein>
    <recommendedName>
        <fullName>ALS2 C-terminal-like protein</fullName>
    </recommendedName>
</protein>
<sequence length="953" mass="107869">MCSPEEAALLRLEEVFSATLARINSLVFQPLLEAGPEASDPWGRECLQLLQQLHSSSQQLWDVMEESLHSLRERLRRPEAVGLESLLLLQSADRVLQVHLEYIESYTCCVAVQAFQKAVKRRSEYWRGQRKALRQVLSGLSSEGSVGTALLQALRQPLAHHVQQYVLLLLSLGDTVGECHPTRELVIHAASLFGDLQSFMRQELDQATATQALWPTLSSRLRDVLCTPARRLLQDSQDVPVTVTPLRAERVLLFDDALVLLQGHNIHTFDLKLVWVEPGQDRCTFHLLTPEEGFSFCSKDPQGLVVWQWKVTQAVCQALRGKKDFPVLGAGLEPSEPPTCRCGAYTFHAEGRFCQATYEGEWYWGRPHGKGTLKWPDGRNHVGDFCQGLEHGFGIRLVPQASEDKFDCYKCHWWEGSMCGYGICEYSTSEVYKGYFQEGLRHGFGVLESAPQAPRPLRYTGHWERGQRSGYGVEEDSDRGERYIGMWQADQRHGPGVMVTQAGVCYQGTFQADKMVGPGILLSDDDSLYEGTFTRDLTLVGKGKVTFPNGFTLEGSFGSVSGRGLHTQGVLDTAALPPDPSSTCKRQLGQGVFPVESRWQGVYGAFRDFVRAGCPGDLREALLGFHVQSSRELRKSQEYLCCERTCPEDQAGRMEDLLEELLQHREPEALQQCLRKALSNSLHPLGKLLRTLMLTFQATYAGIGANKHLQGLAQEEVKQHAQELWAAYRGLLQVALQRKGQAPEEDEDAETRDLRVHSLVLPLVLPSFYSELFTLYLLLHEREDSLYSQGITHLSLFPDARLLEFLDVQKHLWPLKDLTLTTNQRYSLVRDKCFLSATECLQKMITTVDPREKLEVLERTYGEIEATVSRVLGREHKLPMDDLLPLLIYVVSRAQIQHLGAEIHLIRDMMDPLHTGGLYDFLLTALESCYEHIQKEDMRLHRLPSRWSSREPW</sequence>
<dbReference type="EMBL" id="BC149185">
    <property type="protein sequence ID" value="AAI49186.1"/>
    <property type="molecule type" value="mRNA"/>
</dbReference>
<dbReference type="RefSeq" id="NP_001095958.1">
    <property type="nucleotide sequence ID" value="NM_001102488.1"/>
</dbReference>
<dbReference type="SMR" id="A6QP75"/>
<dbReference type="FunCoup" id="A6QP75">
    <property type="interactions" value="24"/>
</dbReference>
<dbReference type="STRING" id="9913.ENSBTAP00000023681"/>
<dbReference type="PaxDb" id="9913-ENSBTAP00000023681"/>
<dbReference type="Ensembl" id="ENSBTAT00000023681.6">
    <property type="protein sequence ID" value="ENSBTAP00000023681.5"/>
    <property type="gene ID" value="ENSBTAG00000017812.7"/>
</dbReference>
<dbReference type="GeneID" id="506969"/>
<dbReference type="KEGG" id="bta:506969"/>
<dbReference type="CTD" id="259173"/>
<dbReference type="VEuPathDB" id="HostDB:ENSBTAG00000017812"/>
<dbReference type="VGNC" id="VGNC:25852">
    <property type="gene designation" value="ALS2CL"/>
</dbReference>
<dbReference type="eggNOG" id="KOG0231">
    <property type="taxonomic scope" value="Eukaryota"/>
</dbReference>
<dbReference type="GeneTree" id="ENSGT00940000161305"/>
<dbReference type="InParanoid" id="A6QP75"/>
<dbReference type="OMA" id="HWQEGSM"/>
<dbReference type="OrthoDB" id="48314at2759"/>
<dbReference type="Reactome" id="R-BTA-8876198">
    <property type="pathway name" value="RAB GEFs exchange GTP for GDP on RABs"/>
</dbReference>
<dbReference type="Proteomes" id="UP000009136">
    <property type="component" value="Chromosome 22"/>
</dbReference>
<dbReference type="Bgee" id="ENSBTAG00000017812">
    <property type="expression patterns" value="Expressed in isthmus of fallopian tube and 103 other cell types or tissues"/>
</dbReference>
<dbReference type="GO" id="GO:0005737">
    <property type="term" value="C:cytoplasm"/>
    <property type="evidence" value="ECO:0000318"/>
    <property type="project" value="GO_Central"/>
</dbReference>
<dbReference type="GO" id="GO:0031410">
    <property type="term" value="C:cytoplasmic vesicle"/>
    <property type="evidence" value="ECO:0000318"/>
    <property type="project" value="GO_Central"/>
</dbReference>
<dbReference type="GO" id="GO:0005096">
    <property type="term" value="F:GTPase activator activity"/>
    <property type="evidence" value="ECO:0007669"/>
    <property type="project" value="UniProtKB-KW"/>
</dbReference>
<dbReference type="GO" id="GO:0005085">
    <property type="term" value="F:guanyl-nucleotide exchange factor activity"/>
    <property type="evidence" value="ECO:0000318"/>
    <property type="project" value="GO_Central"/>
</dbReference>
<dbReference type="GO" id="GO:0031267">
    <property type="term" value="F:small GTPase binding"/>
    <property type="evidence" value="ECO:0000318"/>
    <property type="project" value="GO_Central"/>
</dbReference>
<dbReference type="GO" id="GO:0016197">
    <property type="term" value="P:endosomal transport"/>
    <property type="evidence" value="ECO:0000318"/>
    <property type="project" value="GO_Central"/>
</dbReference>
<dbReference type="FunFam" id="1.20.1050.80:FF:000006">
    <property type="entry name" value="ALS2 C-terminal-like protein"/>
    <property type="match status" value="1"/>
</dbReference>
<dbReference type="Gene3D" id="1.20.900.10">
    <property type="entry name" value="Dbl homology (DH) domain"/>
    <property type="match status" value="1"/>
</dbReference>
<dbReference type="Gene3D" id="2.20.110.10">
    <property type="entry name" value="Histone H3 K4-specific methyltransferase SET7/9 N-terminal domain"/>
    <property type="match status" value="2"/>
</dbReference>
<dbReference type="Gene3D" id="1.20.1050.80">
    <property type="entry name" value="VPS9 domain"/>
    <property type="match status" value="1"/>
</dbReference>
<dbReference type="InterPro" id="IPR051984">
    <property type="entry name" value="Alsin_GEFs/MotNeuronReg"/>
</dbReference>
<dbReference type="InterPro" id="IPR035899">
    <property type="entry name" value="DBL_dom_sf"/>
</dbReference>
<dbReference type="InterPro" id="IPR003409">
    <property type="entry name" value="MORN"/>
</dbReference>
<dbReference type="InterPro" id="IPR003123">
    <property type="entry name" value="VPS9"/>
</dbReference>
<dbReference type="InterPro" id="IPR037191">
    <property type="entry name" value="VPS9_dom_sf"/>
</dbReference>
<dbReference type="PANTHER" id="PTHR46089:SF1">
    <property type="entry name" value="ALS2 C-TERMINAL-LIKE PROTEIN"/>
    <property type="match status" value="1"/>
</dbReference>
<dbReference type="PANTHER" id="PTHR46089">
    <property type="entry name" value="ALSIN HOMOLOG"/>
    <property type="match status" value="1"/>
</dbReference>
<dbReference type="Pfam" id="PF02493">
    <property type="entry name" value="MORN"/>
    <property type="match status" value="6"/>
</dbReference>
<dbReference type="Pfam" id="PF25383">
    <property type="entry name" value="PH_alsin"/>
    <property type="match status" value="1"/>
</dbReference>
<dbReference type="Pfam" id="PF02204">
    <property type="entry name" value="VPS9"/>
    <property type="match status" value="1"/>
</dbReference>
<dbReference type="SMART" id="SM00698">
    <property type="entry name" value="MORN"/>
    <property type="match status" value="7"/>
</dbReference>
<dbReference type="SUPFAM" id="SSF48065">
    <property type="entry name" value="DBL homology domain (DH-domain)"/>
    <property type="match status" value="1"/>
</dbReference>
<dbReference type="SUPFAM" id="SSF82185">
    <property type="entry name" value="Histone H3 K4-specific methyltransferase SET7/9 N-terminal domain"/>
    <property type="match status" value="2"/>
</dbReference>
<dbReference type="SUPFAM" id="SSF109993">
    <property type="entry name" value="VPS9 domain"/>
    <property type="match status" value="1"/>
</dbReference>
<dbReference type="PROSITE" id="PS51205">
    <property type="entry name" value="VPS9"/>
    <property type="match status" value="1"/>
</dbReference>
<evidence type="ECO:0000250" key="1"/>
<evidence type="ECO:0000255" key="2">
    <source>
        <dbReference type="PROSITE-ProRule" id="PRU00550"/>
    </source>
</evidence>